<sequence>MSEESDGKLIEDSLIQLRCHFTWKLLIEAPEIPDLENRIWEEIQFLDTKYNVGIHNLLAYVKHLKGQNEEALVSLKKAEDLIQKEHANQADIRSLVTWGNFAWVYYHMGRLAEAQTYLDKVENTCKKFANPSRYRMECPEVDCEEGWALAKCGGKNYERAKTCFEKALEGNPENPEFNTGYAITVYRLDKFNTASGRNKAFSLHVLKRAVRLNPDDVYIRVLLALKLQDEGQEAEGEKYIEEALTSISSQAYVFQYAAKFYRRKGSVDKALELLKMALETTPTSAFLHHQMGLCYRAQMIQIKEATNWQPRGQDRETVDRLVQLAICKFEKTIMLKRTFEMAYVDLAETYAEIGHHRKAEEHFQKGLRMKIFEDQLKQEIHYHYGRFQEHHGKSQDKAITHYLKGLKIEKMSHSREKLLNALEKLAKRCIHQNVRVVESVSLLGLIHKLKGEVSDALLCYERALRLAADLNPIF</sequence>
<comment type="function">
    <text evidence="3">IFIT1B is likely non-functional, lacking the critical antiviral role of IFIT1. Unlike IFIT1, which is essential in the innate immune response as part of an interferon-dependent multiprotein complex, IFIT1B does not prevent the translation of viral RNAs that lack host-specific 2'-O-methylation at their 5' cap. Consequently, it probably cannot inhibit their translation by competing with the host translation machinery.</text>
</comment>
<comment type="interaction">
    <interactant intactId="EBI-3507164">
        <id>Q5T764</id>
    </interactant>
    <interactant intactId="EBI-745127">
        <id>O14879</id>
        <label>IFIT3</label>
    </interactant>
    <organismsDiffer>false</organismsDiffer>
    <experiments>6</experiments>
</comment>
<comment type="similarity">
    <text evidence="4">Belongs to the IFIT family.</text>
</comment>
<keyword id="KW-1185">Reference proteome</keyword>
<keyword id="KW-0677">Repeat</keyword>
<keyword id="KW-0802">TPR repeat</keyword>
<accession>Q5T764</accession>
<accession>A7E245</accession>
<feature type="chain" id="PRO_0000285728" description="Protein IFIT1 homolog B">
    <location>
        <begin position="1"/>
        <end position="474"/>
    </location>
</feature>
<feature type="repeat" description="TPR 1" evidence="1">
    <location>
        <begin position="52"/>
        <end position="85"/>
    </location>
</feature>
<feature type="repeat" description="TPR 2" evidence="1">
    <location>
        <begin position="95"/>
        <end position="128"/>
    </location>
</feature>
<feature type="repeat" description="TPR 3" evidence="2">
    <location>
        <begin position="141"/>
        <end position="174"/>
    </location>
</feature>
<feature type="repeat" description="TPR 4" evidence="1">
    <location>
        <begin position="182"/>
        <end position="216"/>
    </location>
</feature>
<feature type="repeat" description="TPR 5" evidence="1">
    <location>
        <begin position="218"/>
        <end position="250"/>
    </location>
</feature>
<feature type="repeat" description="TPR 6" evidence="2">
    <location>
        <begin position="251"/>
        <end position="284"/>
    </location>
</feature>
<feature type="repeat" description="TPR 7" evidence="1">
    <location>
        <begin position="305"/>
        <end position="339"/>
    </location>
</feature>
<feature type="repeat" description="TPR 8" evidence="2">
    <location>
        <begin position="340"/>
        <end position="373"/>
    </location>
</feature>
<feature type="repeat" description="TPR 9" evidence="1">
    <location>
        <begin position="378"/>
        <end position="412"/>
    </location>
</feature>
<feature type="repeat" description="TPR 10" evidence="2">
    <location>
        <begin position="437"/>
        <end position="470"/>
    </location>
</feature>
<feature type="sequence variant" id="VAR_052617" description="In dbSNP:rs7072728.">
    <original>L</original>
    <variation>P</variation>
    <location>
        <position position="188"/>
    </location>
</feature>
<organism>
    <name type="scientific">Homo sapiens</name>
    <name type="common">Human</name>
    <dbReference type="NCBI Taxonomy" id="9606"/>
    <lineage>
        <taxon>Eukaryota</taxon>
        <taxon>Metazoa</taxon>
        <taxon>Chordata</taxon>
        <taxon>Craniata</taxon>
        <taxon>Vertebrata</taxon>
        <taxon>Euteleostomi</taxon>
        <taxon>Mammalia</taxon>
        <taxon>Eutheria</taxon>
        <taxon>Euarchontoglires</taxon>
        <taxon>Primates</taxon>
        <taxon>Haplorrhini</taxon>
        <taxon>Catarrhini</taxon>
        <taxon>Hominidae</taxon>
        <taxon>Homo</taxon>
    </lineage>
</organism>
<name>IFT1B_HUMAN</name>
<reference key="1">
    <citation type="journal article" date="2004" name="Nature">
        <title>The DNA sequence and comparative analysis of human chromosome 10.</title>
        <authorList>
            <person name="Deloukas P."/>
            <person name="Earthrowl M.E."/>
            <person name="Grafham D.V."/>
            <person name="Rubenfield M."/>
            <person name="French L."/>
            <person name="Steward C.A."/>
            <person name="Sims S.K."/>
            <person name="Jones M.C."/>
            <person name="Searle S."/>
            <person name="Scott C."/>
            <person name="Howe K."/>
            <person name="Hunt S.E."/>
            <person name="Andrews T.D."/>
            <person name="Gilbert J.G.R."/>
            <person name="Swarbreck D."/>
            <person name="Ashurst J.L."/>
            <person name="Taylor A."/>
            <person name="Battles J."/>
            <person name="Bird C.P."/>
            <person name="Ainscough R."/>
            <person name="Almeida J.P."/>
            <person name="Ashwell R.I.S."/>
            <person name="Ambrose K.D."/>
            <person name="Babbage A.K."/>
            <person name="Bagguley C.L."/>
            <person name="Bailey J."/>
            <person name="Banerjee R."/>
            <person name="Bates K."/>
            <person name="Beasley H."/>
            <person name="Bray-Allen S."/>
            <person name="Brown A.J."/>
            <person name="Brown J.Y."/>
            <person name="Burford D.C."/>
            <person name="Burrill W."/>
            <person name="Burton J."/>
            <person name="Cahill P."/>
            <person name="Camire D."/>
            <person name="Carter N.P."/>
            <person name="Chapman J.C."/>
            <person name="Clark S.Y."/>
            <person name="Clarke G."/>
            <person name="Clee C.M."/>
            <person name="Clegg S."/>
            <person name="Corby N."/>
            <person name="Coulson A."/>
            <person name="Dhami P."/>
            <person name="Dutta I."/>
            <person name="Dunn M."/>
            <person name="Faulkner L."/>
            <person name="Frankish A."/>
            <person name="Frankland J.A."/>
            <person name="Garner P."/>
            <person name="Garnett J."/>
            <person name="Gribble S."/>
            <person name="Griffiths C."/>
            <person name="Grocock R."/>
            <person name="Gustafson E."/>
            <person name="Hammond S."/>
            <person name="Harley J.L."/>
            <person name="Hart E."/>
            <person name="Heath P.D."/>
            <person name="Ho T.P."/>
            <person name="Hopkins B."/>
            <person name="Horne J."/>
            <person name="Howden P.J."/>
            <person name="Huckle E."/>
            <person name="Hynds C."/>
            <person name="Johnson C."/>
            <person name="Johnson D."/>
            <person name="Kana A."/>
            <person name="Kay M."/>
            <person name="Kimberley A.M."/>
            <person name="Kershaw J.K."/>
            <person name="Kokkinaki M."/>
            <person name="Laird G.K."/>
            <person name="Lawlor S."/>
            <person name="Lee H.M."/>
            <person name="Leongamornlert D.A."/>
            <person name="Laird G."/>
            <person name="Lloyd C."/>
            <person name="Lloyd D.M."/>
            <person name="Loveland J."/>
            <person name="Lovell J."/>
            <person name="McLaren S."/>
            <person name="McLay K.E."/>
            <person name="McMurray A."/>
            <person name="Mashreghi-Mohammadi M."/>
            <person name="Matthews L."/>
            <person name="Milne S."/>
            <person name="Nickerson T."/>
            <person name="Nguyen M."/>
            <person name="Overton-Larty E."/>
            <person name="Palmer S.A."/>
            <person name="Pearce A.V."/>
            <person name="Peck A.I."/>
            <person name="Pelan S."/>
            <person name="Phillimore B."/>
            <person name="Porter K."/>
            <person name="Rice C.M."/>
            <person name="Rogosin A."/>
            <person name="Ross M.T."/>
            <person name="Sarafidou T."/>
            <person name="Sehra H.K."/>
            <person name="Shownkeen R."/>
            <person name="Skuce C.D."/>
            <person name="Smith M."/>
            <person name="Standring L."/>
            <person name="Sycamore N."/>
            <person name="Tester J."/>
            <person name="Thorpe A."/>
            <person name="Torcasso W."/>
            <person name="Tracey A."/>
            <person name="Tromans A."/>
            <person name="Tsolas J."/>
            <person name="Wall M."/>
            <person name="Walsh J."/>
            <person name="Wang H."/>
            <person name="Weinstock K."/>
            <person name="West A.P."/>
            <person name="Willey D.L."/>
            <person name="Whitehead S.L."/>
            <person name="Wilming L."/>
            <person name="Wray P.W."/>
            <person name="Young L."/>
            <person name="Chen Y."/>
            <person name="Lovering R.C."/>
            <person name="Moschonas N.K."/>
            <person name="Siebert R."/>
            <person name="Fechtel K."/>
            <person name="Bentley D."/>
            <person name="Durbin R.M."/>
            <person name="Hubbard T."/>
            <person name="Doucette-Stamm L."/>
            <person name="Beck S."/>
            <person name="Smith D.R."/>
            <person name="Rogers J."/>
        </authorList>
    </citation>
    <scope>NUCLEOTIDE SEQUENCE [LARGE SCALE GENOMIC DNA]</scope>
</reference>
<reference key="2">
    <citation type="submission" date="2005-09" db="EMBL/GenBank/DDBJ databases">
        <authorList>
            <person name="Mural R.J."/>
            <person name="Istrail S."/>
            <person name="Sutton G.G."/>
            <person name="Florea L."/>
            <person name="Halpern A.L."/>
            <person name="Mobarry C.M."/>
            <person name="Lippert R."/>
            <person name="Walenz B."/>
            <person name="Shatkay H."/>
            <person name="Dew I."/>
            <person name="Miller J.R."/>
            <person name="Flanigan M.J."/>
            <person name="Edwards N.J."/>
            <person name="Bolanos R."/>
            <person name="Fasulo D."/>
            <person name="Halldorsson B.V."/>
            <person name="Hannenhalli S."/>
            <person name="Turner R."/>
            <person name="Yooseph S."/>
            <person name="Lu F."/>
            <person name="Nusskern D.R."/>
            <person name="Shue B.C."/>
            <person name="Zheng X.H."/>
            <person name="Zhong F."/>
            <person name="Delcher A.L."/>
            <person name="Huson D.H."/>
            <person name="Kravitz S.A."/>
            <person name="Mouchard L."/>
            <person name="Reinert K."/>
            <person name="Remington K.A."/>
            <person name="Clark A.G."/>
            <person name="Waterman M.S."/>
            <person name="Eichler E.E."/>
            <person name="Adams M.D."/>
            <person name="Hunkapiller M.W."/>
            <person name="Myers E.W."/>
            <person name="Venter J.C."/>
        </authorList>
    </citation>
    <scope>NUCLEOTIDE SEQUENCE [LARGE SCALE GENOMIC DNA]</scope>
</reference>
<reference key="3">
    <citation type="journal article" date="2004" name="Genome Res.">
        <title>The status, quality, and expansion of the NIH full-length cDNA project: the Mammalian Gene Collection (MGC).</title>
        <authorList>
            <consortium name="The MGC Project Team"/>
        </authorList>
    </citation>
    <scope>NUCLEOTIDE SEQUENCE [LARGE SCALE MRNA]</scope>
</reference>
<reference key="4">
    <citation type="journal article" date="2016" name="Elife">
        <title>Evolution-guided functional analyses reveal diverse antiviral specificities encoded by IFIT1 genes in mammals.</title>
        <authorList>
            <person name="Daugherty M.D."/>
            <person name="Schaller A.M."/>
            <person name="Geballe A.P."/>
            <person name="Malik H.S."/>
        </authorList>
    </citation>
    <scope>FUNCTION</scope>
</reference>
<dbReference type="EMBL" id="AL353751">
    <property type="status" value="NOT_ANNOTATED_CDS"/>
    <property type="molecule type" value="Genomic_DNA"/>
</dbReference>
<dbReference type="EMBL" id="CH471066">
    <property type="protein sequence ID" value="EAW50139.1"/>
    <property type="molecule type" value="Genomic_DNA"/>
</dbReference>
<dbReference type="EMBL" id="BC137368">
    <property type="protein sequence ID" value="AAI37369.1"/>
    <property type="molecule type" value="mRNA"/>
</dbReference>
<dbReference type="EMBL" id="BC137369">
    <property type="protein sequence ID" value="AAI37370.1"/>
    <property type="molecule type" value="mRNA"/>
</dbReference>
<dbReference type="EMBL" id="BC150189">
    <property type="protein sequence ID" value="AAI50190.1"/>
    <property type="molecule type" value="mRNA"/>
</dbReference>
<dbReference type="CCDS" id="CCDS31242.1"/>
<dbReference type="RefSeq" id="NP_001010987.1">
    <property type="nucleotide sequence ID" value="NM_001010987.2"/>
</dbReference>
<dbReference type="SMR" id="Q5T764"/>
<dbReference type="BioGRID" id="136196">
    <property type="interactions" value="7"/>
</dbReference>
<dbReference type="FunCoup" id="Q5T764">
    <property type="interactions" value="106"/>
</dbReference>
<dbReference type="IntAct" id="Q5T764">
    <property type="interactions" value="7"/>
</dbReference>
<dbReference type="STRING" id="9606.ENSP00000360874"/>
<dbReference type="iPTMnet" id="Q5T764"/>
<dbReference type="PhosphoSitePlus" id="Q5T764"/>
<dbReference type="BioMuta" id="IFIT1B"/>
<dbReference type="DMDM" id="74762241"/>
<dbReference type="jPOST" id="Q5T764"/>
<dbReference type="MassIVE" id="Q5T764"/>
<dbReference type="PaxDb" id="9606-ENSP00000360874"/>
<dbReference type="PeptideAtlas" id="Q5T764"/>
<dbReference type="ProteomicsDB" id="64644"/>
<dbReference type="Pumba" id="Q5T764"/>
<dbReference type="Antibodypedia" id="48339">
    <property type="antibodies" value="51 antibodies from 15 providers"/>
</dbReference>
<dbReference type="DNASU" id="439996"/>
<dbReference type="Ensembl" id="ENST00000371809.3">
    <property type="protein sequence ID" value="ENSP00000360874.3"/>
    <property type="gene ID" value="ENSG00000204010.3"/>
</dbReference>
<dbReference type="GeneID" id="439996"/>
<dbReference type="KEGG" id="hsa:439996"/>
<dbReference type="MANE-Select" id="ENST00000371809.3">
    <property type="protein sequence ID" value="ENSP00000360874.3"/>
    <property type="RefSeq nucleotide sequence ID" value="NM_001010987.2"/>
    <property type="RefSeq protein sequence ID" value="NP_001010987.1"/>
</dbReference>
<dbReference type="UCSC" id="uc001kgh.3">
    <property type="organism name" value="human"/>
</dbReference>
<dbReference type="AGR" id="HGNC:23442"/>
<dbReference type="CTD" id="439996"/>
<dbReference type="DisGeNET" id="439996"/>
<dbReference type="GeneCards" id="IFIT1B"/>
<dbReference type="HGNC" id="HGNC:23442">
    <property type="gene designation" value="IFIT1B"/>
</dbReference>
<dbReference type="HPA" id="ENSG00000204010">
    <property type="expression patterns" value="Tissue enriched (bone)"/>
</dbReference>
<dbReference type="neXtProt" id="NX_Q5T764"/>
<dbReference type="OpenTargets" id="ENSG00000204010"/>
<dbReference type="PharmGKB" id="PA165548753"/>
<dbReference type="VEuPathDB" id="HostDB:ENSG00000204010"/>
<dbReference type="eggNOG" id="KOG1124">
    <property type="taxonomic scope" value="Eukaryota"/>
</dbReference>
<dbReference type="GeneTree" id="ENSGT00950000182946"/>
<dbReference type="HOGENOM" id="CLU_043482_1_0_1"/>
<dbReference type="InParanoid" id="Q5T764"/>
<dbReference type="OMA" id="YERAKTC"/>
<dbReference type="OrthoDB" id="10043504at2759"/>
<dbReference type="PAN-GO" id="Q5T764">
    <property type="GO annotations" value="3 GO annotations based on evolutionary models"/>
</dbReference>
<dbReference type="PhylomeDB" id="Q5T764"/>
<dbReference type="TreeFam" id="TF342671"/>
<dbReference type="PathwayCommons" id="Q5T764"/>
<dbReference type="SignaLink" id="Q5T764"/>
<dbReference type="BioGRID-ORCS" id="439996">
    <property type="hits" value="5 hits in 1136 CRISPR screens"/>
</dbReference>
<dbReference type="ChiTaRS" id="IFIT1B">
    <property type="organism name" value="human"/>
</dbReference>
<dbReference type="GenomeRNAi" id="439996"/>
<dbReference type="Pharos" id="Q5T764">
    <property type="development level" value="Tdark"/>
</dbReference>
<dbReference type="PRO" id="PR:Q5T764"/>
<dbReference type="Proteomes" id="UP000005640">
    <property type="component" value="Chromosome 10"/>
</dbReference>
<dbReference type="RNAct" id="Q5T764">
    <property type="molecule type" value="protein"/>
</dbReference>
<dbReference type="Bgee" id="ENSG00000204010">
    <property type="expression patterns" value="Expressed in bone marrow cell and 19 other cell types or tissues"/>
</dbReference>
<dbReference type="GO" id="GO:0005829">
    <property type="term" value="C:cytosol"/>
    <property type="evidence" value="ECO:0000318"/>
    <property type="project" value="GO_Central"/>
</dbReference>
<dbReference type="GO" id="GO:0003723">
    <property type="term" value="F:RNA binding"/>
    <property type="evidence" value="ECO:0000318"/>
    <property type="project" value="GO_Central"/>
</dbReference>
<dbReference type="GO" id="GO:0051607">
    <property type="term" value="P:defense response to virus"/>
    <property type="evidence" value="ECO:0000318"/>
    <property type="project" value="GO_Central"/>
</dbReference>
<dbReference type="FunFam" id="1.25.40.10:FF:000026">
    <property type="entry name" value="Interferon-induced protein with tetratricopeptide repeats 5"/>
    <property type="match status" value="1"/>
</dbReference>
<dbReference type="Gene3D" id="1.25.40.10">
    <property type="entry name" value="Tetratricopeptide repeat domain"/>
    <property type="match status" value="3"/>
</dbReference>
<dbReference type="InterPro" id="IPR011990">
    <property type="entry name" value="TPR-like_helical_dom_sf"/>
</dbReference>
<dbReference type="InterPro" id="IPR019734">
    <property type="entry name" value="TPR_rpt"/>
</dbReference>
<dbReference type="PANTHER" id="PTHR10271">
    <property type="entry name" value="INTERFERON-INDUCED PROTEIN WITH TETRATRICOPEPTIDE REPEATS"/>
    <property type="match status" value="1"/>
</dbReference>
<dbReference type="PANTHER" id="PTHR10271:SF16">
    <property type="entry name" value="INTERFERON-INDUCED PROTEIN WITH TETRATRICOPEPTIDE REPEATS 1B"/>
    <property type="match status" value="1"/>
</dbReference>
<dbReference type="Pfam" id="PF13176">
    <property type="entry name" value="TPR_7"/>
    <property type="match status" value="1"/>
</dbReference>
<dbReference type="Pfam" id="PF13181">
    <property type="entry name" value="TPR_8"/>
    <property type="match status" value="3"/>
</dbReference>
<dbReference type="SMART" id="SM00028">
    <property type="entry name" value="TPR"/>
    <property type="match status" value="6"/>
</dbReference>
<dbReference type="SUPFAM" id="SSF48452">
    <property type="entry name" value="TPR-like"/>
    <property type="match status" value="3"/>
</dbReference>
<dbReference type="PROSITE" id="PS50005">
    <property type="entry name" value="TPR"/>
    <property type="match status" value="4"/>
</dbReference>
<dbReference type="PROSITE" id="PS50293">
    <property type="entry name" value="TPR_REGION"/>
    <property type="match status" value="3"/>
</dbReference>
<gene>
    <name evidence="6" type="primary">IFIT1B</name>
    <name evidence="6" type="synonym">IFIT1L</name>
</gene>
<evidence type="ECO:0000255" key="1"/>
<evidence type="ECO:0000255" key="2">
    <source>
        <dbReference type="PROSITE-ProRule" id="PRU00339"/>
    </source>
</evidence>
<evidence type="ECO:0000269" key="3">
    <source>
    </source>
</evidence>
<evidence type="ECO:0000305" key="4"/>
<evidence type="ECO:0000305" key="5">
    <source>
    </source>
</evidence>
<evidence type="ECO:0000312" key="6">
    <source>
        <dbReference type="HGNC" id="HGNC:23442"/>
    </source>
</evidence>
<protein>
    <recommendedName>
        <fullName evidence="5">Protein IFIT1 homolog B</fullName>
    </recommendedName>
    <alternativeName>
        <fullName evidence="6">Interferon-induced protein with tetratricopeptide repeats 1-like protein</fullName>
    </alternativeName>
    <alternativeName>
        <fullName evidence="6">Interferon-induced protein with tetratricopeptide repeats 1B</fullName>
    </alternativeName>
</protein>
<proteinExistence type="evidence at protein level"/>